<keyword id="KW-0002">3D-structure</keyword>
<keyword id="KW-0256">Endoplasmic reticulum</keyword>
<keyword id="KW-0333">Golgi apparatus</keyword>
<keyword id="KW-0342">GTP-binding</keyword>
<keyword id="KW-0378">Hydrolase</keyword>
<keyword id="KW-0460">Magnesium</keyword>
<keyword id="KW-0472">Membrane</keyword>
<keyword id="KW-0547">Nucleotide-binding</keyword>
<keyword id="KW-0597">Phosphoprotein</keyword>
<keyword id="KW-1185">Reference proteome</keyword>
<keyword id="KW-0812">Transmembrane</keyword>
<keyword id="KW-1133">Transmembrane helix</keyword>
<accession>Q9VC57</accession>
<proteinExistence type="evidence at protein level"/>
<organism>
    <name type="scientific">Drosophila melanogaster</name>
    <name type="common">Fruit fly</name>
    <dbReference type="NCBI Taxonomy" id="7227"/>
    <lineage>
        <taxon>Eukaryota</taxon>
        <taxon>Metazoa</taxon>
        <taxon>Ecdysozoa</taxon>
        <taxon>Arthropoda</taxon>
        <taxon>Hexapoda</taxon>
        <taxon>Insecta</taxon>
        <taxon>Pterygota</taxon>
        <taxon>Neoptera</taxon>
        <taxon>Endopterygota</taxon>
        <taxon>Diptera</taxon>
        <taxon>Brachycera</taxon>
        <taxon>Muscomorpha</taxon>
        <taxon>Ephydroidea</taxon>
        <taxon>Drosophilidae</taxon>
        <taxon>Drosophila</taxon>
        <taxon>Sophophora</taxon>
    </lineage>
</organism>
<dbReference type="EC" id="3.6.5.-" evidence="7"/>
<dbReference type="EMBL" id="AE014297">
    <property type="protein sequence ID" value="AAF56318.1"/>
    <property type="molecule type" value="Genomic_DNA"/>
</dbReference>
<dbReference type="EMBL" id="AE014297">
    <property type="protein sequence ID" value="AAN14008.1"/>
    <property type="molecule type" value="Genomic_DNA"/>
</dbReference>
<dbReference type="EMBL" id="AY069079">
    <property type="protein sequence ID" value="AAL39224.1"/>
    <property type="molecule type" value="mRNA"/>
</dbReference>
<dbReference type="EMBL" id="BT004893">
    <property type="protein sequence ID" value="AAO47871.1"/>
    <property type="molecule type" value="mRNA"/>
</dbReference>
<dbReference type="RefSeq" id="NP_001287506.1">
    <property type="nucleotide sequence ID" value="NM_001300577.1"/>
</dbReference>
<dbReference type="RefSeq" id="NP_651274.1">
    <property type="nucleotide sequence ID" value="NM_143017.3"/>
</dbReference>
<dbReference type="RefSeq" id="NP_733020.1">
    <property type="nucleotide sequence ID" value="NM_170157.2"/>
</dbReference>
<dbReference type="PDB" id="3X1D">
    <property type="method" value="X-ray"/>
    <property type="resolution" value="2.87 A"/>
    <property type="chains" value="A=1-541"/>
</dbReference>
<dbReference type="PDBsum" id="3X1D"/>
<dbReference type="SMR" id="Q9VC57"/>
<dbReference type="BioGRID" id="67860">
    <property type="interactions" value="76"/>
</dbReference>
<dbReference type="DIP" id="DIP-59281N"/>
<dbReference type="FunCoup" id="Q9VC57">
    <property type="interactions" value="1516"/>
</dbReference>
<dbReference type="IntAct" id="Q9VC57">
    <property type="interactions" value="2"/>
</dbReference>
<dbReference type="STRING" id="7227.FBpp0084037"/>
<dbReference type="TCDB" id="1.N.5.1.2">
    <property type="family name" value="the endoplasmic reticulum fusion gtpase, atlastin (atlastin) family"/>
</dbReference>
<dbReference type="iPTMnet" id="Q9VC57"/>
<dbReference type="PaxDb" id="7227-FBpp0084036"/>
<dbReference type="DNASU" id="42934"/>
<dbReference type="EnsemblMetazoa" id="FBtr0084656">
    <property type="protein sequence ID" value="FBpp0084036"/>
    <property type="gene ID" value="FBgn0039213"/>
</dbReference>
<dbReference type="EnsemblMetazoa" id="FBtr0084657">
    <property type="protein sequence ID" value="FBpp0084037"/>
    <property type="gene ID" value="FBgn0039213"/>
</dbReference>
<dbReference type="EnsemblMetazoa" id="FBtr0345218">
    <property type="protein sequence ID" value="FBpp0311413"/>
    <property type="gene ID" value="FBgn0039213"/>
</dbReference>
<dbReference type="GeneID" id="42934"/>
<dbReference type="KEGG" id="dme:Dmel_CG6668"/>
<dbReference type="UCSC" id="CG6668-RA">
    <property type="organism name" value="d. melanogaster"/>
</dbReference>
<dbReference type="AGR" id="FB:FBgn0039213"/>
<dbReference type="CTD" id="42934"/>
<dbReference type="FlyBase" id="FBgn0039213">
    <property type="gene designation" value="atl"/>
</dbReference>
<dbReference type="VEuPathDB" id="VectorBase:FBgn0039213"/>
<dbReference type="eggNOG" id="KOG2037">
    <property type="taxonomic scope" value="Eukaryota"/>
</dbReference>
<dbReference type="GeneTree" id="ENSGT00940000165594"/>
<dbReference type="HOGENOM" id="CLU_021447_2_1_1"/>
<dbReference type="InParanoid" id="Q9VC57"/>
<dbReference type="OMA" id="GFIHNIW"/>
<dbReference type="OrthoDB" id="7788754at2759"/>
<dbReference type="PhylomeDB" id="Q9VC57"/>
<dbReference type="SignaLink" id="Q9VC57"/>
<dbReference type="BioGRID-ORCS" id="42934">
    <property type="hits" value="0 hits in 3 CRISPR screens"/>
</dbReference>
<dbReference type="EvolutionaryTrace" id="Q9VC57"/>
<dbReference type="GenomeRNAi" id="42934"/>
<dbReference type="PRO" id="PR:Q9VC57"/>
<dbReference type="Proteomes" id="UP000000803">
    <property type="component" value="Chromosome 3R"/>
</dbReference>
<dbReference type="Bgee" id="FBgn0039213">
    <property type="expression patterns" value="Expressed in thoracico-abdominal ganglion (Drosophila) and 233 other cell types or tissues"/>
</dbReference>
<dbReference type="ExpressionAtlas" id="Q9VC57">
    <property type="expression patterns" value="baseline and differential"/>
</dbReference>
<dbReference type="GO" id="GO:0005737">
    <property type="term" value="C:cytoplasm"/>
    <property type="evidence" value="ECO:0000314"/>
    <property type="project" value="FlyBase"/>
</dbReference>
<dbReference type="GO" id="GO:0012505">
    <property type="term" value="C:endomembrane system"/>
    <property type="evidence" value="ECO:0007005"/>
    <property type="project" value="FlyBase"/>
</dbReference>
<dbReference type="GO" id="GO:0005783">
    <property type="term" value="C:endoplasmic reticulum"/>
    <property type="evidence" value="ECO:0000314"/>
    <property type="project" value="UniProtKB"/>
</dbReference>
<dbReference type="GO" id="GO:0005789">
    <property type="term" value="C:endoplasmic reticulum membrane"/>
    <property type="evidence" value="ECO:0000314"/>
    <property type="project" value="UniProtKB"/>
</dbReference>
<dbReference type="GO" id="GO:0005794">
    <property type="term" value="C:Golgi apparatus"/>
    <property type="evidence" value="ECO:0000314"/>
    <property type="project" value="UniProtKB"/>
</dbReference>
<dbReference type="GO" id="GO:0000139">
    <property type="term" value="C:Golgi membrane"/>
    <property type="evidence" value="ECO:0007669"/>
    <property type="project" value="UniProtKB-SubCell"/>
</dbReference>
<dbReference type="GO" id="GO:0016020">
    <property type="term" value="C:membrane"/>
    <property type="evidence" value="ECO:0000314"/>
    <property type="project" value="UniProtKB"/>
</dbReference>
<dbReference type="GO" id="GO:0140506">
    <property type="term" value="F:endoplasmic reticulum-autophagosome adaptor activity"/>
    <property type="evidence" value="ECO:0000314"/>
    <property type="project" value="FlyBase"/>
</dbReference>
<dbReference type="GO" id="GO:0005525">
    <property type="term" value="F:GTP binding"/>
    <property type="evidence" value="ECO:0000315"/>
    <property type="project" value="UniProtKB"/>
</dbReference>
<dbReference type="GO" id="GO:0030742">
    <property type="term" value="F:GTP-dependent protein binding"/>
    <property type="evidence" value="ECO:0000314"/>
    <property type="project" value="FlyBase"/>
</dbReference>
<dbReference type="GO" id="GO:0003924">
    <property type="term" value="F:GTPase activity"/>
    <property type="evidence" value="ECO:0000314"/>
    <property type="project" value="UniProtKB"/>
</dbReference>
<dbReference type="GO" id="GO:0140523">
    <property type="term" value="F:GTPase-dependent fusogenic activity"/>
    <property type="evidence" value="ECO:0000314"/>
    <property type="project" value="UniProtKB"/>
</dbReference>
<dbReference type="GO" id="GO:0032561">
    <property type="term" value="F:guanyl ribonucleotide binding"/>
    <property type="evidence" value="ECO:0000315"/>
    <property type="project" value="FlyBase"/>
</dbReference>
<dbReference type="GO" id="GO:0042802">
    <property type="term" value="F:identical protein binding"/>
    <property type="evidence" value="ECO:0000314"/>
    <property type="project" value="UniProtKB"/>
</dbReference>
<dbReference type="GO" id="GO:0016320">
    <property type="term" value="P:endoplasmic reticulum membrane fusion"/>
    <property type="evidence" value="ECO:0000314"/>
    <property type="project" value="UniProtKB"/>
</dbReference>
<dbReference type="GO" id="GO:0007029">
    <property type="term" value="P:endoplasmic reticulum organization"/>
    <property type="evidence" value="ECO:0000315"/>
    <property type="project" value="UniProtKB"/>
</dbReference>
<dbReference type="GO" id="GO:1990809">
    <property type="term" value="P:endoplasmic reticulum tubular network membrane organization"/>
    <property type="evidence" value="ECO:0000315"/>
    <property type="project" value="UniProtKB"/>
</dbReference>
<dbReference type="GO" id="GO:0007030">
    <property type="term" value="P:Golgi organization"/>
    <property type="evidence" value="ECO:0000315"/>
    <property type="project" value="UniProtKB"/>
</dbReference>
<dbReference type="GO" id="GO:0061025">
    <property type="term" value="P:membrane fusion"/>
    <property type="evidence" value="ECO:0000314"/>
    <property type="project" value="UniProtKB"/>
</dbReference>
<dbReference type="GO" id="GO:0007019">
    <property type="term" value="P:microtubule depolymerization"/>
    <property type="evidence" value="ECO:0000315"/>
    <property type="project" value="UniProtKB"/>
</dbReference>
<dbReference type="GO" id="GO:0007517">
    <property type="term" value="P:muscle organ development"/>
    <property type="evidence" value="ECO:0000315"/>
    <property type="project" value="UniProtKB"/>
</dbReference>
<dbReference type="GO" id="GO:0007528">
    <property type="term" value="P:neuromuscular junction development"/>
    <property type="evidence" value="ECO:0000315"/>
    <property type="project" value="FlyBase"/>
</dbReference>
<dbReference type="GO" id="GO:0048691">
    <property type="term" value="P:positive regulation of axon extension involved in regeneration"/>
    <property type="evidence" value="ECO:0000315"/>
    <property type="project" value="FlyBase"/>
</dbReference>
<dbReference type="GO" id="GO:0051260">
    <property type="term" value="P:protein homooligomerization"/>
    <property type="evidence" value="ECO:0000314"/>
    <property type="project" value="UniProtKB"/>
</dbReference>
<dbReference type="GO" id="GO:0031114">
    <property type="term" value="P:regulation of microtubule depolymerization"/>
    <property type="evidence" value="ECO:0000315"/>
    <property type="project" value="FlyBase"/>
</dbReference>
<dbReference type="GO" id="GO:0008582">
    <property type="term" value="P:regulation of synaptic assembly at neuromuscular junction"/>
    <property type="evidence" value="ECO:0000315"/>
    <property type="project" value="FlyBase"/>
</dbReference>
<dbReference type="GO" id="GO:0061709">
    <property type="term" value="P:reticulophagy"/>
    <property type="evidence" value="ECO:0000315"/>
    <property type="project" value="FlyBase"/>
</dbReference>
<dbReference type="GO" id="GO:0051124">
    <property type="term" value="P:synaptic assembly at neuromuscular junction"/>
    <property type="evidence" value="ECO:0000315"/>
    <property type="project" value="UniProtKB"/>
</dbReference>
<dbReference type="CDD" id="cd01851">
    <property type="entry name" value="GBP"/>
    <property type="match status" value="1"/>
</dbReference>
<dbReference type="FunFam" id="3.40.50.300:FF:001514">
    <property type="entry name" value="Atlastin, isoform C"/>
    <property type="match status" value="1"/>
</dbReference>
<dbReference type="FunFam" id="1.20.58.420:FF:000001">
    <property type="entry name" value="Atlastin-1 isoform 1"/>
    <property type="match status" value="1"/>
</dbReference>
<dbReference type="Gene3D" id="1.20.58.420">
    <property type="entry name" value="AHSP"/>
    <property type="match status" value="1"/>
</dbReference>
<dbReference type="Gene3D" id="3.40.50.300">
    <property type="entry name" value="P-loop containing nucleotide triphosphate hydrolases"/>
    <property type="match status" value="1"/>
</dbReference>
<dbReference type="InterPro" id="IPR030386">
    <property type="entry name" value="G_GB1_RHD3_dom"/>
</dbReference>
<dbReference type="InterPro" id="IPR036543">
    <property type="entry name" value="Guanylate-bd_C_sf"/>
</dbReference>
<dbReference type="InterPro" id="IPR015894">
    <property type="entry name" value="Guanylate-bd_N"/>
</dbReference>
<dbReference type="InterPro" id="IPR027417">
    <property type="entry name" value="P-loop_NTPase"/>
</dbReference>
<dbReference type="PANTHER" id="PTHR10751">
    <property type="entry name" value="GUANYLATE BINDING PROTEIN"/>
    <property type="match status" value="1"/>
</dbReference>
<dbReference type="Pfam" id="PF02263">
    <property type="entry name" value="GBP"/>
    <property type="match status" value="1"/>
</dbReference>
<dbReference type="SUPFAM" id="SSF48340">
    <property type="entry name" value="Interferon-induced guanylate-binding protein 1 (GBP1), C-terminal domain"/>
    <property type="match status" value="1"/>
</dbReference>
<dbReference type="SUPFAM" id="SSF52540">
    <property type="entry name" value="P-loop containing nucleoside triphosphate hydrolases"/>
    <property type="match status" value="1"/>
</dbReference>
<dbReference type="PROSITE" id="PS51715">
    <property type="entry name" value="G_GB1_RHD3"/>
    <property type="match status" value="1"/>
</dbReference>
<comment type="function">
    <text evidence="6 7 8 9">Membrane-anchored GTPase that mediates the GTP-dependent fusion of endoplasmic reticulum (ER) membranes, maintaining the continuous ER network (PubMed:19633650, PubMed:38509071). It facilitates the formation of three-way junctions where ER tubules intersect. Two atlastin-1 on neighboring ER tubules bind GTP and form loose homodimers through the GB1/RHD3-type G domains and 3HB regions. Upon GTP hydrolysis, the 3HB regions tighten, pulling the membranes together to drive their fusion. After fusion, the homodimer disassembles upon release of inorganic phosphate (Pi). Subsequently, GDP dissociates, resetting the monomers to a conformation ready for a new fusion cycle (PubMed:19633650, PubMed:25407413). May also regulate more or less directly Golgi biogenesis (PubMed:19341724). May also regulate microtubule polymerization and Golgi biogenesis. Required for dopaminergic neurons survival and the growth of muscles and synapses at neuromuscular junctions (PubMed:19341724).</text>
</comment>
<comment type="catalytic activity">
    <reaction evidence="8 9">
        <text>GTP + H2O = GDP + phosphate + H(+)</text>
        <dbReference type="Rhea" id="RHEA:19669"/>
        <dbReference type="ChEBI" id="CHEBI:15377"/>
        <dbReference type="ChEBI" id="CHEBI:15378"/>
        <dbReference type="ChEBI" id="CHEBI:37565"/>
        <dbReference type="ChEBI" id="CHEBI:43474"/>
        <dbReference type="ChEBI" id="CHEBI:58189"/>
    </reaction>
    <physiologicalReaction direction="left-to-right" evidence="11 12">
        <dbReference type="Rhea" id="RHEA:19670"/>
    </physiologicalReaction>
</comment>
<comment type="subunit">
    <text evidence="6 7">Monomeric and homodimeric. The homodimer, transiently formed by two molecules on opposing membranes, is the active form mediating ER membrane fusion (PubMed:19633650). Interacts with spas; interaction may regulate microtubule dynamics (PubMed:19341724).</text>
</comment>
<comment type="interaction">
    <interactant intactId="EBI-173493">
        <id>Q9VC57</id>
    </interactant>
    <interactant intactId="EBI-173493">
        <id>Q9VC57</id>
        <label>atl</label>
    </interactant>
    <organismsDiffer>false</organismsDiffer>
    <experiments>10</experiments>
</comment>
<comment type="interaction">
    <interactant intactId="EBI-173493">
        <id>Q9VC57</id>
    </interactant>
    <interactant intactId="EBI-52313065">
        <id>Q9VI53</id>
        <label>Dmel\CG1105</label>
    </interactant>
    <organismsDiffer>false</organismsDiffer>
    <experiments>2</experiments>
</comment>
<comment type="subcellular location">
    <subcellularLocation>
        <location evidence="6 7">Endoplasmic reticulum membrane</location>
        <topology evidence="1">Multi-pass membrane protein</topology>
    </subcellularLocation>
    <subcellularLocation>
        <location evidence="6">Golgi apparatus membrane</location>
        <topology evidence="1">Multi-pass membrane protein</topology>
    </subcellularLocation>
    <text evidence="6">Colocalizes with microtubules.</text>
</comment>
<comment type="tissue specificity">
    <text evidence="7">Ubiquitously expressed.</text>
</comment>
<comment type="developmental stage">
    <text evidence="4 6 7">Expression levels are high during embryonic development. Expressed within neuropil regions of the brain and ventral nerve cord in larval CNS and larval body-wall muscles (at protein level).</text>
</comment>
<comment type="domain">
    <text evidence="1">The GB1/RHD3-type G domain mediates GTP binding and hydrolysis as well as homodimerization.</text>
</comment>
<comment type="domain">
    <text evidence="1">The two three-helix bundle (3HB) regions in the homodimer are loosely associated initially, but they tighten upon GTP hydrolysis, facilitating the fusion of membranes.</text>
</comment>
<comment type="disruption phenotype">
    <text evidence="4 6">The gene is essential with only a few escapers. Flies display a short life span and are sensitive to mechanical shocks. Following bumping they undergo muscle spasm, followed by paralysis, delayed spasm and finally recovery. The sensitivity to shocks increases with age.</text>
</comment>
<comment type="similarity">
    <text evidence="3">Belongs to the TRAFAC class dynamin-like GTPase superfamily. GB1/RHD3 GTPase family. GB1 subfamily.</text>
</comment>
<evidence type="ECO:0000250" key="1">
    <source>
        <dbReference type="UniProtKB" id="Q8WXF7"/>
    </source>
</evidence>
<evidence type="ECO:0000255" key="2"/>
<evidence type="ECO:0000255" key="3">
    <source>
        <dbReference type="PROSITE-ProRule" id="PRU01052"/>
    </source>
</evidence>
<evidence type="ECO:0000269" key="4">
    <source>
    </source>
</evidence>
<evidence type="ECO:0000269" key="5">
    <source>
    </source>
</evidence>
<evidence type="ECO:0000269" key="6">
    <source>
    </source>
</evidence>
<evidence type="ECO:0000269" key="7">
    <source>
    </source>
</evidence>
<evidence type="ECO:0000269" key="8">
    <source>
    </source>
</evidence>
<evidence type="ECO:0000269" key="9">
    <source>
    </source>
</evidence>
<evidence type="ECO:0000303" key="10">
    <source>
    </source>
</evidence>
<evidence type="ECO:0000305" key="11">
    <source>
    </source>
</evidence>
<evidence type="ECO:0000305" key="12">
    <source>
    </source>
</evidence>
<evidence type="ECO:0007744" key="13">
    <source>
        <dbReference type="PDB" id="3X1D"/>
    </source>
</evidence>
<evidence type="ECO:0007829" key="14">
    <source>
        <dbReference type="PDB" id="3X1D"/>
    </source>
</evidence>
<feature type="chain" id="PRO_0000384815" description="Atlastin">
    <location>
        <begin position="1"/>
        <end position="541"/>
    </location>
</feature>
<feature type="topological domain" description="Cytoplasmic" evidence="1">
    <location>
        <begin position="1"/>
        <end position="424"/>
    </location>
</feature>
<feature type="transmembrane region" description="Helical" evidence="2">
    <location>
        <begin position="425"/>
        <end position="445"/>
    </location>
</feature>
<feature type="topological domain" description="Lumenal" evidence="1">
    <location>
        <begin position="446"/>
        <end position="448"/>
    </location>
</feature>
<feature type="transmembrane region" description="Helical" evidence="2">
    <location>
        <begin position="449"/>
        <end position="469"/>
    </location>
</feature>
<feature type="topological domain" description="Cytoplasmic" evidence="1">
    <location>
        <begin position="470"/>
        <end position="541"/>
    </location>
</feature>
<feature type="domain" description="GB1/RHD3-type G" evidence="3">
    <location>
        <begin position="35"/>
        <end position="284"/>
    </location>
</feature>
<feature type="region of interest" description="3HB (three-helix bundle) domain" evidence="1">
    <location>
        <begin position="322"/>
        <end position="413"/>
    </location>
</feature>
<feature type="region of interest" description="Linker" evidence="1">
    <location>
        <begin position="414"/>
        <end position="422"/>
    </location>
</feature>
<feature type="binding site" evidence="8 13">
    <location>
        <position position="48"/>
    </location>
    <ligand>
        <name>GDP</name>
        <dbReference type="ChEBI" id="CHEBI:58189"/>
    </ligand>
</feature>
<feature type="binding site" evidence="1">
    <location>
        <position position="48"/>
    </location>
    <ligand>
        <name>GTP</name>
        <dbReference type="ChEBI" id="CHEBI:37565"/>
    </ligand>
</feature>
<feature type="binding site" evidence="8 13">
    <location>
        <position position="49"/>
    </location>
    <ligand>
        <name>GDP</name>
        <dbReference type="ChEBI" id="CHEBI:58189"/>
    </ligand>
</feature>
<feature type="binding site" evidence="1">
    <location>
        <position position="49"/>
    </location>
    <ligand>
        <name>GTP</name>
        <dbReference type="ChEBI" id="CHEBI:37565"/>
    </ligand>
</feature>
<feature type="binding site" evidence="8 13">
    <location>
        <position position="50"/>
    </location>
    <ligand>
        <name>GDP</name>
        <dbReference type="ChEBI" id="CHEBI:58189"/>
    </ligand>
</feature>
<feature type="binding site" evidence="1">
    <location>
        <position position="50"/>
    </location>
    <ligand>
        <name>GTP</name>
        <dbReference type="ChEBI" id="CHEBI:37565"/>
    </ligand>
</feature>
<feature type="binding site" evidence="8 13">
    <location>
        <position position="51"/>
    </location>
    <ligand>
        <name>GDP</name>
        <dbReference type="ChEBI" id="CHEBI:58189"/>
    </ligand>
</feature>
<feature type="binding site" evidence="1">
    <location>
        <position position="51"/>
    </location>
    <ligand>
        <name>GTP</name>
        <dbReference type="ChEBI" id="CHEBI:37565"/>
    </ligand>
</feature>
<feature type="binding site" evidence="8 13">
    <location>
        <position position="52"/>
    </location>
    <ligand>
        <name>GDP</name>
        <dbReference type="ChEBI" id="CHEBI:58189"/>
    </ligand>
</feature>
<feature type="binding site" evidence="1">
    <location>
        <position position="52"/>
    </location>
    <ligand>
        <name>GTP</name>
        <dbReference type="ChEBI" id="CHEBI:37565"/>
    </ligand>
</feature>
<feature type="binding site" evidence="8 13">
    <location>
        <position position="52"/>
    </location>
    <ligand>
        <name>Mg(2+)</name>
        <dbReference type="ChEBI" id="CHEBI:18420"/>
    </ligand>
</feature>
<feature type="binding site" evidence="1">
    <location>
        <position position="53"/>
    </location>
    <ligand>
        <name>GTP</name>
        <dbReference type="ChEBI" id="CHEBI:37565"/>
    </ligand>
</feature>
<feature type="binding site" evidence="8 13">
    <location>
        <position position="121"/>
    </location>
    <ligand>
        <name>Mg(2+)</name>
        <dbReference type="ChEBI" id="CHEBI:18420"/>
    </ligand>
</feature>
<feature type="binding site" evidence="8 13">
    <location>
        <position position="192"/>
    </location>
    <ligand>
        <name>GDP</name>
        <dbReference type="ChEBI" id="CHEBI:58189"/>
    </ligand>
</feature>
<feature type="binding site" evidence="1">
    <location>
        <position position="192"/>
    </location>
    <ligand>
        <name>GTP</name>
        <dbReference type="ChEBI" id="CHEBI:37565"/>
    </ligand>
</feature>
<feature type="binding site" evidence="8 13">
    <location>
        <position position="193"/>
    </location>
    <ligand>
        <name>GDP</name>
        <dbReference type="ChEBI" id="CHEBI:58189"/>
    </ligand>
</feature>
<feature type="binding site" evidence="1">
    <location>
        <position position="193"/>
    </location>
    <ligand>
        <name>GTP</name>
        <dbReference type="ChEBI" id="CHEBI:37565"/>
    </ligand>
</feature>
<feature type="binding site" evidence="8 13">
    <location>
        <position position="251"/>
    </location>
    <ligand>
        <name>GDP</name>
        <dbReference type="ChEBI" id="CHEBI:58189"/>
    </ligand>
</feature>
<feature type="binding site" evidence="1">
    <location>
        <position position="251"/>
    </location>
    <ligand>
        <name>GTP</name>
        <dbReference type="ChEBI" id="CHEBI:37565"/>
    </ligand>
</feature>
<feature type="modified residue" description="Phosphothreonine" evidence="5">
    <location>
        <position position="514"/>
    </location>
</feature>
<feature type="mutagenesis site" description="Loss of GTPase activity. Loss of endoplasmic reticulum membrane fusion. Does not oligomerize." evidence="7">
    <original>K</original>
    <variation>A</variation>
    <location>
        <position position="51"/>
    </location>
</feature>
<feature type="mutagenesis site" description="Sensitivity to mechanical shocks." evidence="4">
    <original>R</original>
    <variation>Q</variation>
    <location>
        <position position="192"/>
    </location>
</feature>
<feature type="mutagenesis site" description="Sensitivity to mechanical shocks." evidence="4">
    <original>R</original>
    <variation>C</variation>
    <location>
        <position position="214"/>
    </location>
</feature>
<feature type="mutagenesis site" description="Decreased GTPase-dependent fusogenic activity." evidence="9">
    <original>K</original>
    <variation>H</variation>
    <location>
        <position position="418"/>
    </location>
</feature>
<feature type="strand" evidence="14">
    <location>
        <begin position="7"/>
        <end position="9"/>
    </location>
</feature>
<feature type="strand" evidence="14">
    <location>
        <begin position="14"/>
        <end position="16"/>
    </location>
</feature>
<feature type="helix" evidence="14">
    <location>
        <begin position="21"/>
        <end position="28"/>
    </location>
</feature>
<feature type="strand" evidence="14">
    <location>
        <begin position="40"/>
        <end position="46"/>
    </location>
</feature>
<feature type="helix" evidence="14">
    <location>
        <begin position="51"/>
        <end position="59"/>
    </location>
</feature>
<feature type="turn" evidence="14">
    <location>
        <begin position="63"/>
        <end position="67"/>
    </location>
</feature>
<feature type="strand" evidence="14">
    <location>
        <begin position="99"/>
        <end position="102"/>
    </location>
</feature>
<feature type="strand" evidence="14">
    <location>
        <begin position="110"/>
        <end position="112"/>
    </location>
</feature>
<feature type="strand" evidence="14">
    <location>
        <begin position="118"/>
        <end position="121"/>
    </location>
</feature>
<feature type="helix" evidence="14">
    <location>
        <begin position="141"/>
        <end position="144"/>
    </location>
</feature>
<feature type="strand" evidence="14">
    <location>
        <begin position="147"/>
        <end position="156"/>
    </location>
</feature>
<feature type="helix" evidence="14">
    <location>
        <begin position="159"/>
        <end position="163"/>
    </location>
</feature>
<feature type="turn" evidence="14">
    <location>
        <begin position="164"/>
        <end position="170"/>
    </location>
</feature>
<feature type="helix" evidence="14">
    <location>
        <begin position="171"/>
        <end position="178"/>
    </location>
</feature>
<feature type="strand" evidence="14">
    <location>
        <begin position="186"/>
        <end position="194"/>
    </location>
</feature>
<feature type="turn" evidence="14">
    <location>
        <begin position="197"/>
        <end position="199"/>
    </location>
</feature>
<feature type="helix" evidence="14">
    <location>
        <begin position="204"/>
        <end position="213"/>
    </location>
</feature>
<feature type="helix" evidence="14">
    <location>
        <begin position="217"/>
        <end position="219"/>
    </location>
</feature>
<feature type="strand" evidence="14">
    <location>
        <begin position="220"/>
        <end position="222"/>
    </location>
</feature>
<feature type="turn" evidence="14">
    <location>
        <begin position="228"/>
        <end position="232"/>
    </location>
</feature>
<feature type="helix" evidence="14">
    <location>
        <begin position="233"/>
        <end position="235"/>
    </location>
</feature>
<feature type="strand" evidence="14">
    <location>
        <begin position="237"/>
        <end position="245"/>
    </location>
</feature>
<feature type="helix" evidence="14">
    <location>
        <begin position="249"/>
        <end position="252"/>
    </location>
</feature>
<feature type="helix" evidence="14">
    <location>
        <begin position="266"/>
        <end position="279"/>
    </location>
</feature>
<feature type="helix" evidence="14">
    <location>
        <begin position="300"/>
        <end position="307"/>
    </location>
</feature>
<feature type="turn" evidence="14">
    <location>
        <begin position="308"/>
        <end position="310"/>
    </location>
</feature>
<feature type="strand" evidence="14">
    <location>
        <begin position="314"/>
        <end position="316"/>
    </location>
</feature>
<feature type="helix" evidence="14">
    <location>
        <begin position="323"/>
        <end position="343"/>
    </location>
</feature>
<feature type="helix" evidence="14">
    <location>
        <begin position="346"/>
        <end position="349"/>
    </location>
</feature>
<feature type="strand" evidence="14">
    <location>
        <begin position="351"/>
        <end position="354"/>
    </location>
</feature>
<feature type="helix" evidence="14">
    <location>
        <begin position="362"/>
        <end position="375"/>
    </location>
</feature>
<feature type="turn" evidence="14">
    <location>
        <begin position="387"/>
        <end position="390"/>
    </location>
</feature>
<feature type="helix" evidence="14">
    <location>
        <begin position="391"/>
        <end position="400"/>
    </location>
</feature>
<feature type="turn" evidence="14">
    <location>
        <begin position="402"/>
        <end position="405"/>
    </location>
</feature>
<gene>
    <name type="primary">atl</name>
    <name type="ORF">CG6668</name>
</gene>
<protein>
    <recommendedName>
        <fullName evidence="10">Atlastin</fullName>
        <ecNumber evidence="7">3.6.5.-</ecNumber>
    </recommendedName>
</protein>
<sequence length="541" mass="60912">MGGSAVQVINASEEHTFVLNEDALSEVLMRDEVKDRFVCVVSVAGAFRKGKSFLLDFFLRYMYSKYVHHDATDWLGGESDPLEGFSWRGGSERDTTGILMWSDIFLHDYPNGDKIAIILLDTQGAFDSQSTVRDCATVFALSTMLSSVQIYNLSQNIQEDDLQHLQLFTEYGRLALADTGKKPFQRLQFLVRDWSFPYEAEYGALGGDKILKRRLEVSDKQHPELQSLRRHISSCFTEVACFLMPHPGLNVATNPKFDGRLQDITPEFKSSLRSLVPMLLAPDNLVYKEISGQRVRARDLIQYFQSYMNIYKGNELPEPKSMLVATAEANHLTAVAAAKELYGQLMEEVCGGTRPYLSTAHLQTEHLRVKDKALFQFAAKRKMGGEEFTEKFRKQLEDDLEEVFTNYQAHNESKNIFKAARTPAVYFACAVIMYILSGIFGLVGLYTFANFCNLVMGVALLTLALWAYIRYSGELSDFGGKLDDFATLLWEKFMRPIYHGCMEKGIHHVATHATEMAVGGGAASYRSQTSVNASNGKVKRS</sequence>
<reference key="1">
    <citation type="journal article" date="2000" name="Science">
        <title>The genome sequence of Drosophila melanogaster.</title>
        <authorList>
            <person name="Adams M.D."/>
            <person name="Celniker S.E."/>
            <person name="Holt R.A."/>
            <person name="Evans C.A."/>
            <person name="Gocayne J.D."/>
            <person name="Amanatides P.G."/>
            <person name="Scherer S.E."/>
            <person name="Li P.W."/>
            <person name="Hoskins R.A."/>
            <person name="Galle R.F."/>
            <person name="George R.A."/>
            <person name="Lewis S.E."/>
            <person name="Richards S."/>
            <person name="Ashburner M."/>
            <person name="Henderson S.N."/>
            <person name="Sutton G.G."/>
            <person name="Wortman J.R."/>
            <person name="Yandell M.D."/>
            <person name="Zhang Q."/>
            <person name="Chen L.X."/>
            <person name="Brandon R.C."/>
            <person name="Rogers Y.-H.C."/>
            <person name="Blazej R.G."/>
            <person name="Champe M."/>
            <person name="Pfeiffer B.D."/>
            <person name="Wan K.H."/>
            <person name="Doyle C."/>
            <person name="Baxter E.G."/>
            <person name="Helt G."/>
            <person name="Nelson C.R."/>
            <person name="Miklos G.L.G."/>
            <person name="Abril J.F."/>
            <person name="Agbayani A."/>
            <person name="An H.-J."/>
            <person name="Andrews-Pfannkoch C."/>
            <person name="Baldwin D."/>
            <person name="Ballew R.M."/>
            <person name="Basu A."/>
            <person name="Baxendale J."/>
            <person name="Bayraktaroglu L."/>
            <person name="Beasley E.M."/>
            <person name="Beeson K.Y."/>
            <person name="Benos P.V."/>
            <person name="Berman B.P."/>
            <person name="Bhandari D."/>
            <person name="Bolshakov S."/>
            <person name="Borkova D."/>
            <person name="Botchan M.R."/>
            <person name="Bouck J."/>
            <person name="Brokstein P."/>
            <person name="Brottier P."/>
            <person name="Burtis K.C."/>
            <person name="Busam D.A."/>
            <person name="Butler H."/>
            <person name="Cadieu E."/>
            <person name="Center A."/>
            <person name="Chandra I."/>
            <person name="Cherry J.M."/>
            <person name="Cawley S."/>
            <person name="Dahlke C."/>
            <person name="Davenport L.B."/>
            <person name="Davies P."/>
            <person name="de Pablos B."/>
            <person name="Delcher A."/>
            <person name="Deng Z."/>
            <person name="Mays A.D."/>
            <person name="Dew I."/>
            <person name="Dietz S.M."/>
            <person name="Dodson K."/>
            <person name="Doup L.E."/>
            <person name="Downes M."/>
            <person name="Dugan-Rocha S."/>
            <person name="Dunkov B.C."/>
            <person name="Dunn P."/>
            <person name="Durbin K.J."/>
            <person name="Evangelista C.C."/>
            <person name="Ferraz C."/>
            <person name="Ferriera S."/>
            <person name="Fleischmann W."/>
            <person name="Fosler C."/>
            <person name="Gabrielian A.E."/>
            <person name="Garg N.S."/>
            <person name="Gelbart W.M."/>
            <person name="Glasser K."/>
            <person name="Glodek A."/>
            <person name="Gong F."/>
            <person name="Gorrell J.H."/>
            <person name="Gu Z."/>
            <person name="Guan P."/>
            <person name="Harris M."/>
            <person name="Harris N.L."/>
            <person name="Harvey D.A."/>
            <person name="Heiman T.J."/>
            <person name="Hernandez J.R."/>
            <person name="Houck J."/>
            <person name="Hostin D."/>
            <person name="Houston K.A."/>
            <person name="Howland T.J."/>
            <person name="Wei M.-H."/>
            <person name="Ibegwam C."/>
            <person name="Jalali M."/>
            <person name="Kalush F."/>
            <person name="Karpen G.H."/>
            <person name="Ke Z."/>
            <person name="Kennison J.A."/>
            <person name="Ketchum K.A."/>
            <person name="Kimmel B.E."/>
            <person name="Kodira C.D."/>
            <person name="Kraft C.L."/>
            <person name="Kravitz S."/>
            <person name="Kulp D."/>
            <person name="Lai Z."/>
            <person name="Lasko P."/>
            <person name="Lei Y."/>
            <person name="Levitsky A.A."/>
            <person name="Li J.H."/>
            <person name="Li Z."/>
            <person name="Liang Y."/>
            <person name="Lin X."/>
            <person name="Liu X."/>
            <person name="Mattei B."/>
            <person name="McIntosh T.C."/>
            <person name="McLeod M.P."/>
            <person name="McPherson D."/>
            <person name="Merkulov G."/>
            <person name="Milshina N.V."/>
            <person name="Mobarry C."/>
            <person name="Morris J."/>
            <person name="Moshrefi A."/>
            <person name="Mount S.M."/>
            <person name="Moy M."/>
            <person name="Murphy B."/>
            <person name="Murphy L."/>
            <person name="Muzny D.M."/>
            <person name="Nelson D.L."/>
            <person name="Nelson D.R."/>
            <person name="Nelson K.A."/>
            <person name="Nixon K."/>
            <person name="Nusskern D.R."/>
            <person name="Pacleb J.M."/>
            <person name="Palazzolo M."/>
            <person name="Pittman G.S."/>
            <person name="Pan S."/>
            <person name="Pollard J."/>
            <person name="Puri V."/>
            <person name="Reese M.G."/>
            <person name="Reinert K."/>
            <person name="Remington K."/>
            <person name="Saunders R.D.C."/>
            <person name="Scheeler F."/>
            <person name="Shen H."/>
            <person name="Shue B.C."/>
            <person name="Siden-Kiamos I."/>
            <person name="Simpson M."/>
            <person name="Skupski M.P."/>
            <person name="Smith T.J."/>
            <person name="Spier E."/>
            <person name="Spradling A.C."/>
            <person name="Stapleton M."/>
            <person name="Strong R."/>
            <person name="Sun E."/>
            <person name="Svirskas R."/>
            <person name="Tector C."/>
            <person name="Turner R."/>
            <person name="Venter E."/>
            <person name="Wang A.H."/>
            <person name="Wang X."/>
            <person name="Wang Z.-Y."/>
            <person name="Wassarman D.A."/>
            <person name="Weinstock G.M."/>
            <person name="Weissenbach J."/>
            <person name="Williams S.M."/>
            <person name="Woodage T."/>
            <person name="Worley K.C."/>
            <person name="Wu D."/>
            <person name="Yang S."/>
            <person name="Yao Q.A."/>
            <person name="Ye J."/>
            <person name="Yeh R.-F."/>
            <person name="Zaveri J.S."/>
            <person name="Zhan M."/>
            <person name="Zhang G."/>
            <person name="Zhao Q."/>
            <person name="Zheng L."/>
            <person name="Zheng X.H."/>
            <person name="Zhong F.N."/>
            <person name="Zhong W."/>
            <person name="Zhou X."/>
            <person name="Zhu S.C."/>
            <person name="Zhu X."/>
            <person name="Smith H.O."/>
            <person name="Gibbs R.A."/>
            <person name="Myers E.W."/>
            <person name="Rubin G.M."/>
            <person name="Venter J.C."/>
        </authorList>
    </citation>
    <scope>NUCLEOTIDE SEQUENCE [LARGE SCALE GENOMIC DNA]</scope>
    <source>
        <strain>Berkeley</strain>
    </source>
</reference>
<reference key="2">
    <citation type="journal article" date="2002" name="Genome Biol.">
        <title>Annotation of the Drosophila melanogaster euchromatic genome: a systematic review.</title>
        <authorList>
            <person name="Misra S."/>
            <person name="Crosby M.A."/>
            <person name="Mungall C.J."/>
            <person name="Matthews B.B."/>
            <person name="Campbell K.S."/>
            <person name="Hradecky P."/>
            <person name="Huang Y."/>
            <person name="Kaminker J.S."/>
            <person name="Millburn G.H."/>
            <person name="Prochnik S.E."/>
            <person name="Smith C.D."/>
            <person name="Tupy J.L."/>
            <person name="Whitfield E.J."/>
            <person name="Bayraktaroglu L."/>
            <person name="Berman B.P."/>
            <person name="Bettencourt B.R."/>
            <person name="Celniker S.E."/>
            <person name="de Grey A.D.N.J."/>
            <person name="Drysdale R.A."/>
            <person name="Harris N.L."/>
            <person name="Richter J."/>
            <person name="Russo S."/>
            <person name="Schroeder A.J."/>
            <person name="Shu S.Q."/>
            <person name="Stapleton M."/>
            <person name="Yamada C."/>
            <person name="Ashburner M."/>
            <person name="Gelbart W.M."/>
            <person name="Rubin G.M."/>
            <person name="Lewis S.E."/>
        </authorList>
    </citation>
    <scope>GENOME REANNOTATION</scope>
    <source>
        <strain>Berkeley</strain>
    </source>
</reference>
<reference key="3">
    <citation type="submission" date="2003-02" db="EMBL/GenBank/DDBJ databases">
        <authorList>
            <person name="Stapleton M."/>
            <person name="Brokstein P."/>
            <person name="Hong L."/>
            <person name="Agbayani A."/>
            <person name="Carlson J.W."/>
            <person name="Champe M."/>
            <person name="Chavez C."/>
            <person name="Dorsett V."/>
            <person name="Dresnek D."/>
            <person name="Farfan D."/>
            <person name="Frise E."/>
            <person name="George R.A."/>
            <person name="Gonzalez M."/>
            <person name="Guarin H."/>
            <person name="Kronmiller B."/>
            <person name="Li P.W."/>
            <person name="Liao G."/>
            <person name="Miranda A."/>
            <person name="Mungall C.J."/>
            <person name="Nunoo J."/>
            <person name="Pacleb J.M."/>
            <person name="Paragas V."/>
            <person name="Park S."/>
            <person name="Patel S."/>
            <person name="Phouanenavong S."/>
            <person name="Wan K.H."/>
            <person name="Yu C."/>
            <person name="Lewis S.E."/>
            <person name="Rubin G.M."/>
            <person name="Celniker S.E."/>
        </authorList>
    </citation>
    <scope>NUCLEOTIDE SEQUENCE [LARGE SCALE MRNA]</scope>
    <source>
        <strain>Berkeley</strain>
        <tissue>Embryo</tissue>
        <tissue>Head</tissue>
    </source>
</reference>
<reference key="4">
    <citation type="journal article" date="2008" name="J. Proteome Res.">
        <title>Phosphoproteome analysis of Drosophila melanogaster embryos.</title>
        <authorList>
            <person name="Zhai B."/>
            <person name="Villen J."/>
            <person name="Beausoleil S.A."/>
            <person name="Mintseris J."/>
            <person name="Gygi S.P."/>
        </authorList>
    </citation>
    <scope>PHOSPHORYLATION [LARGE SCALE ANALYSIS] AT THR-514</scope>
    <scope>IDENTIFICATION BY MASS SPECTROMETRY</scope>
    <source>
        <tissue>Embryo</tissue>
    </source>
</reference>
<reference key="5">
    <citation type="journal article" date="2008" name="Neurobiol. Aging">
        <title>Loss of spastic paraplegia gene atlastin induces age-dependent death of dopaminergic neurons in Drosophila.</title>
        <authorList>
            <person name="Lee Y."/>
            <person name="Paik D."/>
            <person name="Bang S."/>
            <person name="Kang J."/>
            <person name="Chun B."/>
            <person name="Lee S."/>
            <person name="Bae E."/>
            <person name="Chung J."/>
            <person name="Kim J."/>
        </authorList>
    </citation>
    <scope>DISRUPTION PHENOTYPE</scope>
    <scope>DEVELOPMENTAL STAGE</scope>
    <scope>MUTAGENESIS OF ARG-192 AND ARG-214</scope>
</reference>
<reference key="6">
    <citation type="journal article" date="2009" name="Dev. Biol.">
        <title>Drosophila Atlastin regulates the stability of muscle microtubules and is required for synapse development.</title>
        <authorList>
            <person name="Lee M."/>
            <person name="Paik S.K."/>
            <person name="Lee M.-J."/>
            <person name="Kim Y.-J."/>
            <person name="Kim S."/>
            <person name="Nahm M."/>
            <person name="Oh S.-J."/>
            <person name="Kim H.-M."/>
            <person name="Yim J."/>
            <person name="Lee C.J."/>
            <person name="Bae Y.C."/>
            <person name="Lee S."/>
        </authorList>
    </citation>
    <scope>FUNCTION</scope>
    <scope>DISRUPTION PHENOTYPE</scope>
    <scope>INTERACTION WITH SPAS</scope>
    <scope>SUBCELLULAR LOCATION</scope>
    <scope>DEVELOPMENTAL STAGE</scope>
</reference>
<reference key="7">
    <citation type="journal article" date="2009" name="Nature">
        <title>Homotypic fusion of ER membranes requires the dynamin-like GTPase Atlastin.</title>
        <authorList>
            <person name="Orso G."/>
            <person name="Pendin D."/>
            <person name="Liu S."/>
            <person name="Tosetto J."/>
            <person name="Moss T.J."/>
            <person name="Faust J.E."/>
            <person name="Micaroni M."/>
            <person name="Egorova A."/>
            <person name="Martinuzzi A."/>
            <person name="McNew J.A."/>
            <person name="Daga A."/>
        </authorList>
    </citation>
    <scope>FUNCTION</scope>
    <scope>SUBCELLULAR LOCATION</scope>
    <scope>MUTAGENESIS OF LYS-51</scope>
    <scope>HOMOOLIGOMERIZATION</scope>
    <scope>TISSUE SPECIFICITY</scope>
    <scope>DEVELOPMENTAL STAGE</scope>
</reference>
<reference key="8">
    <citation type="journal article" date="2024" name="Nat. Commun.">
        <title>Dissecting the mechanism of atlastin-mediated homotypic membrane fusion at the single-molecule level.</title>
        <authorList>
            <person name="Shi L."/>
            <person name="Yang C."/>
            <person name="Zhang M."/>
            <person name="Li K."/>
            <person name="Wang K."/>
            <person name="Jiao L."/>
            <person name="Liu R."/>
            <person name="Wang Y."/>
            <person name="Li M."/>
            <person name="Wang Y."/>
            <person name="Ma L."/>
            <person name="Hu S."/>
            <person name="Bian X."/>
        </authorList>
    </citation>
    <scope>FUNCTION</scope>
    <scope>CATALYTIC ACTIVITY</scope>
    <scope>MUTAGENESIS OF LYS-418</scope>
</reference>
<reference evidence="13" key="9">
    <citation type="journal article" date="2015" name="Protein Cell">
        <title>Comparison of human and Drosophila atlastin GTPases.</title>
        <authorList>
            <person name="Wu F."/>
            <person name="Hu X."/>
            <person name="Bian X."/>
            <person name="Liu X."/>
            <person name="Hu J."/>
        </authorList>
    </citation>
    <scope>X-RAY CRYSTALLOGRAPHY (2.87 ANGSTROMS) IN COMPLEX WITH GDP AND MG(2+)</scope>
    <scope>FUNCTION</scope>
    <scope>CATALYTIC ACTIVITY</scope>
    <scope>SUBUNIT</scope>
    <scope>SUBCELLULAR LOCATION</scope>
</reference>
<name>ATLAS_DROME</name>